<keyword id="KW-0238">DNA-binding</keyword>
<keyword id="KW-1185">Reference proteome</keyword>
<keyword id="KW-0678">Repressor</keyword>
<keyword id="KW-0804">Transcription</keyword>
<keyword id="KW-0805">Transcription regulation</keyword>
<reference key="1">
    <citation type="submission" date="1997-12" db="EMBL/GenBank/DDBJ databases">
        <authorList>
            <person name="Klein C."/>
        </authorList>
    </citation>
    <scope>NUCLEOTIDE SEQUENCE [GENOMIC DNA]</scope>
    <source>
        <strain>ATCC 6633 / PCI 219 / NRS 231</strain>
    </source>
</reference>
<reference key="2">
    <citation type="journal article" date="1997" name="Nature">
        <title>The complete genome sequence of the Gram-positive bacterium Bacillus subtilis.</title>
        <authorList>
            <person name="Kunst F."/>
            <person name="Ogasawara N."/>
            <person name="Moszer I."/>
            <person name="Albertini A.M."/>
            <person name="Alloni G."/>
            <person name="Azevedo V."/>
            <person name="Bertero M.G."/>
            <person name="Bessieres P."/>
            <person name="Bolotin A."/>
            <person name="Borchert S."/>
            <person name="Borriss R."/>
            <person name="Boursier L."/>
            <person name="Brans A."/>
            <person name="Braun M."/>
            <person name="Brignell S.C."/>
            <person name="Bron S."/>
            <person name="Brouillet S."/>
            <person name="Bruschi C.V."/>
            <person name="Caldwell B."/>
            <person name="Capuano V."/>
            <person name="Carter N.M."/>
            <person name="Choi S.-K."/>
            <person name="Codani J.-J."/>
            <person name="Connerton I.F."/>
            <person name="Cummings N.J."/>
            <person name="Daniel R.A."/>
            <person name="Denizot F."/>
            <person name="Devine K.M."/>
            <person name="Duesterhoeft A."/>
            <person name="Ehrlich S.D."/>
            <person name="Emmerson P.T."/>
            <person name="Entian K.-D."/>
            <person name="Errington J."/>
            <person name="Fabret C."/>
            <person name="Ferrari E."/>
            <person name="Foulger D."/>
            <person name="Fritz C."/>
            <person name="Fujita M."/>
            <person name="Fujita Y."/>
            <person name="Fuma S."/>
            <person name="Galizzi A."/>
            <person name="Galleron N."/>
            <person name="Ghim S.-Y."/>
            <person name="Glaser P."/>
            <person name="Goffeau A."/>
            <person name="Golightly E.J."/>
            <person name="Grandi G."/>
            <person name="Guiseppi G."/>
            <person name="Guy B.J."/>
            <person name="Haga K."/>
            <person name="Haiech J."/>
            <person name="Harwood C.R."/>
            <person name="Henaut A."/>
            <person name="Hilbert H."/>
            <person name="Holsappel S."/>
            <person name="Hosono S."/>
            <person name="Hullo M.-F."/>
            <person name="Itaya M."/>
            <person name="Jones L.-M."/>
            <person name="Joris B."/>
            <person name="Karamata D."/>
            <person name="Kasahara Y."/>
            <person name="Klaerr-Blanchard M."/>
            <person name="Klein C."/>
            <person name="Kobayashi Y."/>
            <person name="Koetter P."/>
            <person name="Koningstein G."/>
            <person name="Krogh S."/>
            <person name="Kumano M."/>
            <person name="Kurita K."/>
            <person name="Lapidus A."/>
            <person name="Lardinois S."/>
            <person name="Lauber J."/>
            <person name="Lazarevic V."/>
            <person name="Lee S.-M."/>
            <person name="Levine A."/>
            <person name="Liu H."/>
            <person name="Masuda S."/>
            <person name="Mauel C."/>
            <person name="Medigue C."/>
            <person name="Medina N."/>
            <person name="Mellado R.P."/>
            <person name="Mizuno M."/>
            <person name="Moestl D."/>
            <person name="Nakai S."/>
            <person name="Noback M."/>
            <person name="Noone D."/>
            <person name="O'Reilly M."/>
            <person name="Ogawa K."/>
            <person name="Ogiwara A."/>
            <person name="Oudega B."/>
            <person name="Park S.-H."/>
            <person name="Parro V."/>
            <person name="Pohl T.M."/>
            <person name="Portetelle D."/>
            <person name="Porwollik S."/>
            <person name="Prescott A.M."/>
            <person name="Presecan E."/>
            <person name="Pujic P."/>
            <person name="Purnelle B."/>
            <person name="Rapoport G."/>
            <person name="Rey M."/>
            <person name="Reynolds S."/>
            <person name="Rieger M."/>
            <person name="Rivolta C."/>
            <person name="Rocha E."/>
            <person name="Roche B."/>
            <person name="Rose M."/>
            <person name="Sadaie Y."/>
            <person name="Sato T."/>
            <person name="Scanlan E."/>
            <person name="Schleich S."/>
            <person name="Schroeter R."/>
            <person name="Scoffone F."/>
            <person name="Sekiguchi J."/>
            <person name="Sekowska A."/>
            <person name="Seror S.J."/>
            <person name="Serror P."/>
            <person name="Shin B.-S."/>
            <person name="Soldo B."/>
            <person name="Sorokin A."/>
            <person name="Tacconi E."/>
            <person name="Takagi T."/>
            <person name="Takahashi H."/>
            <person name="Takemaru K."/>
            <person name="Takeuchi M."/>
            <person name="Tamakoshi A."/>
            <person name="Tanaka T."/>
            <person name="Terpstra P."/>
            <person name="Tognoni A."/>
            <person name="Tosato V."/>
            <person name="Uchiyama S."/>
            <person name="Vandenbol M."/>
            <person name="Vannier F."/>
            <person name="Vassarotti A."/>
            <person name="Viari A."/>
            <person name="Wambutt R."/>
            <person name="Wedler E."/>
            <person name="Wedler H."/>
            <person name="Weitzenegger T."/>
            <person name="Winters P."/>
            <person name="Wipat A."/>
            <person name="Yamamoto H."/>
            <person name="Yamane K."/>
            <person name="Yasumoto K."/>
            <person name="Yata K."/>
            <person name="Yoshida K."/>
            <person name="Yoshikawa H.-F."/>
            <person name="Zumstein E."/>
            <person name="Yoshikawa H."/>
            <person name="Danchin A."/>
        </authorList>
    </citation>
    <scope>NUCLEOTIDE SEQUENCE [LARGE SCALE GENOMIC DNA]</scope>
    <source>
        <strain>168</strain>
    </source>
</reference>
<reference key="3">
    <citation type="journal article" date="2006" name="Mol. Microbiol.">
        <title>Bacillus subtilis RghR (YvaN) represses rapG and rapH, which encode inhibitors of expression of the srfA operon.</title>
        <authorList>
            <person name="Hayashi K."/>
            <person name="Kensuke T."/>
            <person name="Kobayashi K."/>
            <person name="Ogasawara N."/>
            <person name="Ogura M."/>
        </authorList>
    </citation>
    <scope>FUNCTION AS A REPRESSOR</scope>
    <scope>DISRUPTION PHENOTYPE</scope>
    <source>
        <strain>168</strain>
    </source>
</reference>
<sequence>MESFGEQLRALREERKLTVNQLATYSGVSAAGISRIENGKRGVPKPATIKKLAEALKIPYEGLMYKAGYIEEVHEARAPYETKCKLLEKAEAYDLKNLALLENEKWQYLNKEDLLMLDHYFSFISDEAKKRSADD</sequence>
<feature type="chain" id="PRO_0000232704" description="HTH-type transcriptional repressor RghR">
    <location>
        <begin position="1"/>
        <end position="135"/>
    </location>
</feature>
<feature type="domain" description="HTH cro/C1-type" evidence="1">
    <location>
        <begin position="8"/>
        <end position="63"/>
    </location>
</feature>
<feature type="DNA-binding region" description="H-T-H motif" evidence="1">
    <location>
        <begin position="19"/>
        <end position="38"/>
    </location>
</feature>
<accession>O32236</accession>
<accession>Q79D98</accession>
<dbReference type="EMBL" id="U09819">
    <property type="protein sequence ID" value="AAB91590.1"/>
    <property type="molecule type" value="Genomic_DNA"/>
</dbReference>
<dbReference type="EMBL" id="AL009126">
    <property type="protein sequence ID" value="CAB15371.1"/>
    <property type="molecule type" value="Genomic_DNA"/>
</dbReference>
<dbReference type="PIR" id="C70028">
    <property type="entry name" value="C70028"/>
</dbReference>
<dbReference type="RefSeq" id="NP_391246.1">
    <property type="nucleotide sequence ID" value="NC_000964.3"/>
</dbReference>
<dbReference type="RefSeq" id="WP_003220034.1">
    <property type="nucleotide sequence ID" value="NZ_OZ025638.1"/>
</dbReference>
<dbReference type="SMR" id="O32236"/>
<dbReference type="FunCoup" id="O32236">
    <property type="interactions" value="29"/>
</dbReference>
<dbReference type="IntAct" id="O32236">
    <property type="interactions" value="1"/>
</dbReference>
<dbReference type="STRING" id="224308.BSU33660"/>
<dbReference type="PaxDb" id="224308-BSU33660"/>
<dbReference type="EnsemblBacteria" id="CAB15371">
    <property type="protein sequence ID" value="CAB15371"/>
    <property type="gene ID" value="BSU_33660"/>
</dbReference>
<dbReference type="GeneID" id="936180"/>
<dbReference type="KEGG" id="bsu:BSU33660"/>
<dbReference type="PATRIC" id="fig|224308.179.peg.3651"/>
<dbReference type="eggNOG" id="COG1396">
    <property type="taxonomic scope" value="Bacteria"/>
</dbReference>
<dbReference type="InParanoid" id="O32236"/>
<dbReference type="OrthoDB" id="9812960at2"/>
<dbReference type="PhylomeDB" id="O32236"/>
<dbReference type="BioCyc" id="BSUB:BSU33660-MONOMER"/>
<dbReference type="Proteomes" id="UP000001570">
    <property type="component" value="Chromosome"/>
</dbReference>
<dbReference type="GO" id="GO:0003677">
    <property type="term" value="F:DNA binding"/>
    <property type="evidence" value="ECO:0007669"/>
    <property type="project" value="UniProtKB-KW"/>
</dbReference>
<dbReference type="GO" id="GO:0003700">
    <property type="term" value="F:DNA-binding transcription factor activity"/>
    <property type="evidence" value="ECO:0000318"/>
    <property type="project" value="GO_Central"/>
</dbReference>
<dbReference type="GO" id="GO:0006355">
    <property type="term" value="P:regulation of DNA-templated transcription"/>
    <property type="evidence" value="ECO:0000318"/>
    <property type="project" value="GO_Central"/>
</dbReference>
<dbReference type="CDD" id="cd00093">
    <property type="entry name" value="HTH_XRE"/>
    <property type="match status" value="1"/>
</dbReference>
<dbReference type="Gene3D" id="1.10.260.40">
    <property type="entry name" value="lambda repressor-like DNA-binding domains"/>
    <property type="match status" value="1"/>
</dbReference>
<dbReference type="InterPro" id="IPR050807">
    <property type="entry name" value="Bact_TransReg_Diox"/>
</dbReference>
<dbReference type="InterPro" id="IPR001387">
    <property type="entry name" value="Cro/C1-type_HTH"/>
</dbReference>
<dbReference type="InterPro" id="IPR010982">
    <property type="entry name" value="Lambda_DNA-bd_dom_sf"/>
</dbReference>
<dbReference type="InterPro" id="IPR016759">
    <property type="entry name" value="RghR"/>
</dbReference>
<dbReference type="PANTHER" id="PTHR46797">
    <property type="entry name" value="HTH-TYPE TRANSCRIPTIONAL REGULATOR"/>
    <property type="match status" value="1"/>
</dbReference>
<dbReference type="PANTHER" id="PTHR46797:SF1">
    <property type="entry name" value="METHYLPHOSPHONATE SYNTHASE"/>
    <property type="match status" value="1"/>
</dbReference>
<dbReference type="Pfam" id="PF13560">
    <property type="entry name" value="HTH_31"/>
    <property type="match status" value="1"/>
</dbReference>
<dbReference type="PIRSF" id="PIRSF019364">
    <property type="entry name" value="RapGH_repressor"/>
    <property type="match status" value="1"/>
</dbReference>
<dbReference type="SMART" id="SM00530">
    <property type="entry name" value="HTH_XRE"/>
    <property type="match status" value="1"/>
</dbReference>
<dbReference type="SUPFAM" id="SSF47413">
    <property type="entry name" value="lambda repressor-like DNA-binding domains"/>
    <property type="match status" value="1"/>
</dbReference>
<dbReference type="PROSITE" id="PS50943">
    <property type="entry name" value="HTH_CROC1"/>
    <property type="match status" value="1"/>
</dbReference>
<organism>
    <name type="scientific">Bacillus subtilis (strain 168)</name>
    <dbReference type="NCBI Taxonomy" id="224308"/>
    <lineage>
        <taxon>Bacteria</taxon>
        <taxon>Bacillati</taxon>
        <taxon>Bacillota</taxon>
        <taxon>Bacilli</taxon>
        <taxon>Bacillales</taxon>
        <taxon>Bacillaceae</taxon>
        <taxon>Bacillus</taxon>
    </lineage>
</organism>
<name>RGHR_BACSU</name>
<protein>
    <recommendedName>
        <fullName>HTH-type transcriptional repressor RghR</fullName>
    </recommendedName>
    <alternativeName>
        <fullName>RapGH repressor</fullName>
    </alternativeName>
</protein>
<comment type="function">
    <text evidence="2">Represses the expression of yvaM and both rapG and rapH. Binds directly to the promoter regions of yvaM, rapG and rapH.</text>
</comment>
<comment type="disruption phenotype">
    <text evidence="2">Cells lacking this gene display a derepression of rapG and rapH expression, which leads to a down-regulation of sfrA that in turn leads to the expression abolition of both comK and the late com operon comG.</text>
</comment>
<proteinExistence type="evidence at protein level"/>
<evidence type="ECO:0000255" key="1">
    <source>
        <dbReference type="PROSITE-ProRule" id="PRU00257"/>
    </source>
</evidence>
<evidence type="ECO:0000269" key="2">
    <source>
    </source>
</evidence>
<gene>
    <name type="primary">rghR</name>
    <name type="synonym">rghRA</name>
    <name type="synonym">yvaN</name>
    <name type="ordered locus">BSU33660</name>
</gene>